<proteinExistence type="inferred from homology"/>
<sequence>MSGLNLTVRVHPVVLFQVVDAFERRNADSHRVIGTLLGSVDKGVVEVTNCFCVPHKEHDDQVEAELSYALDMYDLNRKVNANENVVGWWATGNEVTNHSSVIHEYYARECNNPVHLTVDTSLQSGRMGLRAYICIQLGVPGGKTGCMFTPIPVELTSYEPETFGLKLLQKTVTVSPAHRPKTVAPMLDLAQISEAATKLQSLLDLILKYVDDVIAHKVTPDNAVGRQLLDLIHSVPHMTHEQFTQMFNANVRDLLMVITLSQLIKTQLQLNEKLTFLPTA</sequence>
<keyword id="KW-0963">Cytoplasm</keyword>
<keyword id="KW-0396">Initiation factor</keyword>
<keyword id="KW-0648">Protein biosynthesis</keyword>
<keyword id="KW-1185">Reference proteome</keyword>
<dbReference type="EMBL" id="CH933806">
    <property type="protein sequence ID" value="EDW13651.1"/>
    <property type="molecule type" value="Genomic_DNA"/>
</dbReference>
<dbReference type="SMR" id="B4KBI4"/>
<dbReference type="FunCoup" id="B4KBI4">
    <property type="interactions" value="2210"/>
</dbReference>
<dbReference type="EnsemblMetazoa" id="FBtr0174559">
    <property type="protein sequence ID" value="FBpp0173051"/>
    <property type="gene ID" value="FBgn0146559"/>
</dbReference>
<dbReference type="EnsemblMetazoa" id="XM_001998154.4">
    <property type="protein sequence ID" value="XP_001998190.1"/>
    <property type="gene ID" value="LOC6572036"/>
</dbReference>
<dbReference type="GeneID" id="6572036"/>
<dbReference type="KEGG" id="dmo:Dmoj_GI23834"/>
<dbReference type="CTD" id="40587"/>
<dbReference type="eggNOG" id="KOG2975">
    <property type="taxonomic scope" value="Eukaryota"/>
</dbReference>
<dbReference type="HOGENOM" id="CLU_027018_0_1_1"/>
<dbReference type="InParanoid" id="B4KBI4"/>
<dbReference type="OMA" id="EYFVHFH"/>
<dbReference type="OrthoDB" id="25498at2759"/>
<dbReference type="PhylomeDB" id="B4KBI4"/>
<dbReference type="Proteomes" id="UP000009192">
    <property type="component" value="Unassembled WGS sequence"/>
</dbReference>
<dbReference type="GO" id="GO:0016282">
    <property type="term" value="C:eukaryotic 43S preinitiation complex"/>
    <property type="evidence" value="ECO:0007669"/>
    <property type="project" value="UniProtKB-UniRule"/>
</dbReference>
<dbReference type="GO" id="GO:0033290">
    <property type="term" value="C:eukaryotic 48S preinitiation complex"/>
    <property type="evidence" value="ECO:0007669"/>
    <property type="project" value="UniProtKB-UniRule"/>
</dbReference>
<dbReference type="GO" id="GO:0071541">
    <property type="term" value="C:eukaryotic translation initiation factor 3 complex, eIF3m"/>
    <property type="evidence" value="ECO:0007669"/>
    <property type="project" value="TreeGrafter"/>
</dbReference>
<dbReference type="GO" id="GO:0140492">
    <property type="term" value="F:metal-dependent deubiquitinase activity"/>
    <property type="evidence" value="ECO:0007669"/>
    <property type="project" value="EnsemblMetazoa"/>
</dbReference>
<dbReference type="GO" id="GO:0003743">
    <property type="term" value="F:translation initiation factor activity"/>
    <property type="evidence" value="ECO:0007669"/>
    <property type="project" value="UniProtKB-UniRule"/>
</dbReference>
<dbReference type="GO" id="GO:0031369">
    <property type="term" value="F:translation initiation factor binding"/>
    <property type="evidence" value="ECO:0007669"/>
    <property type="project" value="InterPro"/>
</dbReference>
<dbReference type="GO" id="GO:0140367">
    <property type="term" value="P:antibacterial innate immune response"/>
    <property type="evidence" value="ECO:0007669"/>
    <property type="project" value="EnsemblMetazoa"/>
</dbReference>
<dbReference type="GO" id="GO:0050829">
    <property type="term" value="P:defense response to Gram-negative bacterium"/>
    <property type="evidence" value="ECO:0007669"/>
    <property type="project" value="EnsemblMetazoa"/>
</dbReference>
<dbReference type="GO" id="GO:0001732">
    <property type="term" value="P:formation of cytoplasmic translation initiation complex"/>
    <property type="evidence" value="ECO:0007669"/>
    <property type="project" value="UniProtKB-UniRule"/>
</dbReference>
<dbReference type="GO" id="GO:0045747">
    <property type="term" value="P:positive regulation of Notch signaling pathway"/>
    <property type="evidence" value="ECO:0007669"/>
    <property type="project" value="EnsemblMetazoa"/>
</dbReference>
<dbReference type="GO" id="GO:0061059">
    <property type="term" value="P:positive regulation of peptidoglycan recognition protein signaling pathway"/>
    <property type="evidence" value="ECO:0007669"/>
    <property type="project" value="EnsemblMetazoa"/>
</dbReference>
<dbReference type="CDD" id="cd08064">
    <property type="entry name" value="MPN_eIF3f"/>
    <property type="match status" value="1"/>
</dbReference>
<dbReference type="FunFam" id="3.40.140.10:FF:000014">
    <property type="entry name" value="Eukaryotic translation initiation factor 3 subunit F"/>
    <property type="match status" value="1"/>
</dbReference>
<dbReference type="Gene3D" id="3.40.140.10">
    <property type="entry name" value="Cytidine Deaminase, domain 2"/>
    <property type="match status" value="1"/>
</dbReference>
<dbReference type="HAMAP" id="MF_03005">
    <property type="entry name" value="eIF3f"/>
    <property type="match status" value="1"/>
</dbReference>
<dbReference type="InterPro" id="IPR027531">
    <property type="entry name" value="eIF3f"/>
</dbReference>
<dbReference type="InterPro" id="IPR024969">
    <property type="entry name" value="EIF3F/CSN6-like_C"/>
</dbReference>
<dbReference type="InterPro" id="IPR000555">
    <property type="entry name" value="JAMM/MPN+_dom"/>
</dbReference>
<dbReference type="InterPro" id="IPR037518">
    <property type="entry name" value="MPN"/>
</dbReference>
<dbReference type="PANTHER" id="PTHR10540:SF6">
    <property type="entry name" value="EUKARYOTIC TRANSLATION INITIATION FACTOR 3 SUBUNIT F"/>
    <property type="match status" value="1"/>
</dbReference>
<dbReference type="PANTHER" id="PTHR10540">
    <property type="entry name" value="EUKARYOTIC TRANSLATION INITIATION FACTOR 3 SUBUNIT F-RELATED"/>
    <property type="match status" value="1"/>
</dbReference>
<dbReference type="Pfam" id="PF01398">
    <property type="entry name" value="JAB"/>
    <property type="match status" value="1"/>
</dbReference>
<dbReference type="Pfam" id="PF13012">
    <property type="entry name" value="MitMem_reg"/>
    <property type="match status" value="1"/>
</dbReference>
<dbReference type="SMART" id="SM00232">
    <property type="entry name" value="JAB_MPN"/>
    <property type="match status" value="1"/>
</dbReference>
<dbReference type="PROSITE" id="PS50249">
    <property type="entry name" value="MPN"/>
    <property type="match status" value="1"/>
</dbReference>
<comment type="function">
    <text evidence="1">Component of the eukaryotic translation initiation factor 3 (eIF-3) complex, which is involved in protein synthesis of a specialized repertoire of mRNAs and, together with other initiation factors, stimulates binding of mRNA and methionyl-tRNAi to the 40S ribosome. The eIF-3 complex specifically targets and initiates translation of a subset of mRNAs involved in cell proliferation.</text>
</comment>
<comment type="subunit">
    <text evidence="1">Component of the eukaryotic translation initiation factor 3 (eIF-3) complex. The eIF-3 complex interacts with pix.</text>
</comment>
<comment type="subcellular location">
    <subcellularLocation>
        <location evidence="1">Cytoplasm</location>
    </subcellularLocation>
</comment>
<comment type="similarity">
    <text evidence="1">Belongs to the eIF-3 subunit F family.</text>
</comment>
<protein>
    <recommendedName>
        <fullName evidence="1">Eukaryotic translation initiation factor 3 subunit F-1</fullName>
        <shortName evidence="1">eIF3f-1</shortName>
    </recommendedName>
    <alternativeName>
        <fullName evidence="1">Eukaryotic translation initiation factor 3 subunit 5-1</fullName>
    </alternativeName>
</protein>
<organism>
    <name type="scientific">Drosophila mojavensis</name>
    <name type="common">Fruit fly</name>
    <dbReference type="NCBI Taxonomy" id="7230"/>
    <lineage>
        <taxon>Eukaryota</taxon>
        <taxon>Metazoa</taxon>
        <taxon>Ecdysozoa</taxon>
        <taxon>Arthropoda</taxon>
        <taxon>Hexapoda</taxon>
        <taxon>Insecta</taxon>
        <taxon>Pterygota</taxon>
        <taxon>Neoptera</taxon>
        <taxon>Endopterygota</taxon>
        <taxon>Diptera</taxon>
        <taxon>Brachycera</taxon>
        <taxon>Muscomorpha</taxon>
        <taxon>Ephydroidea</taxon>
        <taxon>Drosophilidae</taxon>
        <taxon>Drosophila</taxon>
    </lineage>
</organism>
<evidence type="ECO:0000255" key="1">
    <source>
        <dbReference type="HAMAP-Rule" id="MF_03005"/>
    </source>
</evidence>
<evidence type="ECO:0000255" key="2">
    <source>
        <dbReference type="PROSITE-ProRule" id="PRU01182"/>
    </source>
</evidence>
<gene>
    <name evidence="1" type="primary">eIF3f1</name>
    <name evidence="1" type="synonym">eIF3-S5-1</name>
    <name type="ORF">GI23834</name>
</gene>
<name>EI3F1_DROMO</name>
<feature type="chain" id="PRO_0000364305" description="Eukaryotic translation initiation factor 3 subunit F-1">
    <location>
        <begin position="1"/>
        <end position="280"/>
    </location>
</feature>
<feature type="domain" description="MPN" evidence="2">
    <location>
        <begin position="8"/>
        <end position="138"/>
    </location>
</feature>
<reference key="1">
    <citation type="journal article" date="2007" name="Nature">
        <title>Evolution of genes and genomes on the Drosophila phylogeny.</title>
        <authorList>
            <consortium name="Drosophila 12 genomes consortium"/>
        </authorList>
    </citation>
    <scope>NUCLEOTIDE SEQUENCE [LARGE SCALE GENOMIC DNA]</scope>
    <source>
        <strain>Tucson 15081-1352.22</strain>
    </source>
</reference>
<accession>B4KBI4</accession>